<reference key="1">
    <citation type="journal article" date="2008" name="BMC Genomics">
        <title>The genome sequence of the fish pathogen Aliivibrio salmonicida strain LFI1238 shows extensive evidence of gene decay.</title>
        <authorList>
            <person name="Hjerde E."/>
            <person name="Lorentzen M.S."/>
            <person name="Holden M.T."/>
            <person name="Seeger K."/>
            <person name="Paulsen S."/>
            <person name="Bason N."/>
            <person name="Churcher C."/>
            <person name="Harris D."/>
            <person name="Norbertczak H."/>
            <person name="Quail M.A."/>
            <person name="Sanders S."/>
            <person name="Thurston S."/>
            <person name="Parkhill J."/>
            <person name="Willassen N.P."/>
            <person name="Thomson N.R."/>
        </authorList>
    </citation>
    <scope>NUCLEOTIDE SEQUENCE [LARGE SCALE GENOMIC DNA]</scope>
    <source>
        <strain>LFI1238</strain>
    </source>
</reference>
<organism>
    <name type="scientific">Aliivibrio salmonicida (strain LFI1238)</name>
    <name type="common">Vibrio salmonicida (strain LFI1238)</name>
    <dbReference type="NCBI Taxonomy" id="316275"/>
    <lineage>
        <taxon>Bacteria</taxon>
        <taxon>Pseudomonadati</taxon>
        <taxon>Pseudomonadota</taxon>
        <taxon>Gammaproteobacteria</taxon>
        <taxon>Vibrionales</taxon>
        <taxon>Vibrionaceae</taxon>
        <taxon>Aliivibrio</taxon>
    </lineage>
</organism>
<name>SECB_ALISL</name>
<protein>
    <recommendedName>
        <fullName evidence="1">Protein-export protein SecB</fullName>
    </recommendedName>
</protein>
<proteinExistence type="inferred from homology"/>
<keyword id="KW-0143">Chaperone</keyword>
<keyword id="KW-0963">Cytoplasm</keyword>
<keyword id="KW-0653">Protein transport</keyword>
<keyword id="KW-0811">Translocation</keyword>
<keyword id="KW-0813">Transport</keyword>
<sequence length="160" mass="17750">MAEAAQQEQQNFAIQRIFLKDVSFEAPNSPNMFQKEWNPDVKLDLDTQSRELGEGVYEVILRLTVTVKNEEETAFLCEVQQGGIFTAGQMEEAQLAHCLGAFCPNILFPYARETISSLVVKGTFPQLNLAPANFDALFMNYLQNQASETAEAPAEAPAEA</sequence>
<comment type="function">
    <text evidence="1">One of the proteins required for the normal export of preproteins out of the cell cytoplasm. It is a molecular chaperone that binds to a subset of precursor proteins, maintaining them in a translocation-competent state. It also specifically binds to its receptor SecA.</text>
</comment>
<comment type="subunit">
    <text evidence="1">Homotetramer, a dimer of dimers. One homotetramer interacts with 1 SecA dimer.</text>
</comment>
<comment type="subcellular location">
    <subcellularLocation>
        <location evidence="1">Cytoplasm</location>
    </subcellularLocation>
</comment>
<comment type="similarity">
    <text evidence="1">Belongs to the SecB family.</text>
</comment>
<evidence type="ECO:0000255" key="1">
    <source>
        <dbReference type="HAMAP-Rule" id="MF_00821"/>
    </source>
</evidence>
<gene>
    <name evidence="1" type="primary">secB</name>
    <name type="ordered locus">VSAL_I2802</name>
</gene>
<feature type="chain" id="PRO_1000134360" description="Protein-export protein SecB">
    <location>
        <begin position="1"/>
        <end position="160"/>
    </location>
</feature>
<dbReference type="EMBL" id="FM178379">
    <property type="protein sequence ID" value="CAQ80486.1"/>
    <property type="molecule type" value="Genomic_DNA"/>
</dbReference>
<dbReference type="RefSeq" id="WP_012551238.1">
    <property type="nucleotide sequence ID" value="NC_011312.1"/>
</dbReference>
<dbReference type="SMR" id="B6EN68"/>
<dbReference type="KEGG" id="vsa:VSAL_I2802"/>
<dbReference type="eggNOG" id="COG1952">
    <property type="taxonomic scope" value="Bacteria"/>
</dbReference>
<dbReference type="HOGENOM" id="CLU_111574_1_0_6"/>
<dbReference type="Proteomes" id="UP000001730">
    <property type="component" value="Chromosome 1"/>
</dbReference>
<dbReference type="GO" id="GO:0005737">
    <property type="term" value="C:cytoplasm"/>
    <property type="evidence" value="ECO:0007669"/>
    <property type="project" value="UniProtKB-SubCell"/>
</dbReference>
<dbReference type="GO" id="GO:0051082">
    <property type="term" value="F:unfolded protein binding"/>
    <property type="evidence" value="ECO:0007669"/>
    <property type="project" value="InterPro"/>
</dbReference>
<dbReference type="GO" id="GO:0006457">
    <property type="term" value="P:protein folding"/>
    <property type="evidence" value="ECO:0007669"/>
    <property type="project" value="UniProtKB-UniRule"/>
</dbReference>
<dbReference type="GO" id="GO:0051262">
    <property type="term" value="P:protein tetramerization"/>
    <property type="evidence" value="ECO:0007669"/>
    <property type="project" value="InterPro"/>
</dbReference>
<dbReference type="GO" id="GO:0015031">
    <property type="term" value="P:protein transport"/>
    <property type="evidence" value="ECO:0007669"/>
    <property type="project" value="UniProtKB-UniRule"/>
</dbReference>
<dbReference type="Gene3D" id="3.10.420.10">
    <property type="entry name" value="SecB-like"/>
    <property type="match status" value="1"/>
</dbReference>
<dbReference type="HAMAP" id="MF_00821">
    <property type="entry name" value="SecB"/>
    <property type="match status" value="1"/>
</dbReference>
<dbReference type="InterPro" id="IPR003708">
    <property type="entry name" value="SecB"/>
</dbReference>
<dbReference type="InterPro" id="IPR035958">
    <property type="entry name" value="SecB-like_sf"/>
</dbReference>
<dbReference type="NCBIfam" id="NF004393">
    <property type="entry name" value="PRK05751.1-4"/>
    <property type="match status" value="1"/>
</dbReference>
<dbReference type="NCBIfam" id="TIGR00809">
    <property type="entry name" value="secB"/>
    <property type="match status" value="1"/>
</dbReference>
<dbReference type="PANTHER" id="PTHR36918">
    <property type="match status" value="1"/>
</dbReference>
<dbReference type="PANTHER" id="PTHR36918:SF1">
    <property type="entry name" value="PROTEIN-EXPORT PROTEIN SECB"/>
    <property type="match status" value="1"/>
</dbReference>
<dbReference type="Pfam" id="PF02556">
    <property type="entry name" value="SecB"/>
    <property type="match status" value="1"/>
</dbReference>
<dbReference type="PRINTS" id="PR01594">
    <property type="entry name" value="SECBCHAPRONE"/>
</dbReference>
<dbReference type="SUPFAM" id="SSF54611">
    <property type="entry name" value="SecB-like"/>
    <property type="match status" value="1"/>
</dbReference>
<accession>B6EN68</accession>